<keyword id="KW-0131">Cell cycle</keyword>
<keyword id="KW-0132">Cell division</keyword>
<keyword id="KW-0997">Cell inner membrane</keyword>
<keyword id="KW-1003">Cell membrane</keyword>
<keyword id="KW-0133">Cell shape</keyword>
<keyword id="KW-0961">Cell wall biogenesis/degradation</keyword>
<keyword id="KW-0328">Glycosyltransferase</keyword>
<keyword id="KW-0472">Membrane</keyword>
<keyword id="KW-0573">Peptidoglycan synthesis</keyword>
<keyword id="KW-1185">Reference proteome</keyword>
<keyword id="KW-0808">Transferase</keyword>
<comment type="function">
    <text evidence="1">Cell wall formation. Catalyzes the transfer of a GlcNAc subunit on undecaprenyl-pyrophosphoryl-MurNAc-pentapeptide (lipid intermediate I) to form undecaprenyl-pyrophosphoryl-MurNAc-(pentapeptide)GlcNAc (lipid intermediate II).</text>
</comment>
<comment type="catalytic activity">
    <reaction evidence="1">
        <text>di-trans,octa-cis-undecaprenyl diphospho-N-acetyl-alpha-D-muramoyl-L-alanyl-D-glutamyl-meso-2,6-diaminopimeloyl-D-alanyl-D-alanine + UDP-N-acetyl-alpha-D-glucosamine = di-trans,octa-cis-undecaprenyl diphospho-[N-acetyl-alpha-D-glucosaminyl-(1-&gt;4)]-N-acetyl-alpha-D-muramoyl-L-alanyl-D-glutamyl-meso-2,6-diaminopimeloyl-D-alanyl-D-alanine + UDP + H(+)</text>
        <dbReference type="Rhea" id="RHEA:31227"/>
        <dbReference type="ChEBI" id="CHEBI:15378"/>
        <dbReference type="ChEBI" id="CHEBI:57705"/>
        <dbReference type="ChEBI" id="CHEBI:58223"/>
        <dbReference type="ChEBI" id="CHEBI:61387"/>
        <dbReference type="ChEBI" id="CHEBI:61388"/>
        <dbReference type="EC" id="2.4.1.227"/>
    </reaction>
</comment>
<comment type="pathway">
    <text evidence="1">Cell wall biogenesis; peptidoglycan biosynthesis.</text>
</comment>
<comment type="subcellular location">
    <subcellularLocation>
        <location evidence="1">Cell inner membrane</location>
        <topology evidence="1">Peripheral membrane protein</topology>
        <orientation evidence="1">Cytoplasmic side</orientation>
    </subcellularLocation>
</comment>
<comment type="similarity">
    <text evidence="1">Belongs to the glycosyltransferase 28 family. MurG subfamily.</text>
</comment>
<evidence type="ECO:0000255" key="1">
    <source>
        <dbReference type="HAMAP-Rule" id="MF_00033"/>
    </source>
</evidence>
<gene>
    <name evidence="1" type="primary">murG</name>
    <name type="ordered locus">Synpcc7942_2312</name>
</gene>
<name>MURG_SYNE7</name>
<dbReference type="EC" id="2.4.1.227" evidence="1"/>
<dbReference type="EMBL" id="CP000100">
    <property type="protein sequence ID" value="ABB58342.1"/>
    <property type="molecule type" value="Genomic_DNA"/>
</dbReference>
<dbReference type="RefSeq" id="WP_011378403.1">
    <property type="nucleotide sequence ID" value="NZ_JACJTX010000001.1"/>
</dbReference>
<dbReference type="SMR" id="Q31KS7"/>
<dbReference type="STRING" id="1140.Synpcc7942_2312"/>
<dbReference type="CAZy" id="GT28">
    <property type="family name" value="Glycosyltransferase Family 28"/>
</dbReference>
<dbReference type="PaxDb" id="1140-Synpcc7942_2312"/>
<dbReference type="GeneID" id="72431199"/>
<dbReference type="KEGG" id="syf:Synpcc7942_2312"/>
<dbReference type="eggNOG" id="COG0707">
    <property type="taxonomic scope" value="Bacteria"/>
</dbReference>
<dbReference type="HOGENOM" id="CLU_037404_0_1_3"/>
<dbReference type="OrthoDB" id="9808936at2"/>
<dbReference type="BioCyc" id="SYNEL:SYNPCC7942_2312-MONOMER"/>
<dbReference type="UniPathway" id="UPA00219"/>
<dbReference type="Proteomes" id="UP000889800">
    <property type="component" value="Chromosome"/>
</dbReference>
<dbReference type="GO" id="GO:0005886">
    <property type="term" value="C:plasma membrane"/>
    <property type="evidence" value="ECO:0007669"/>
    <property type="project" value="UniProtKB-SubCell"/>
</dbReference>
<dbReference type="GO" id="GO:0051991">
    <property type="term" value="F:UDP-N-acetyl-D-glucosamine:N-acetylmuramoyl-L-alanyl-D-glutamyl-meso-2,6-diaminopimelyl-D-alanyl-D-alanine-diphosphoundecaprenol 4-beta-N-acetylglucosaminlytransferase activity"/>
    <property type="evidence" value="ECO:0007669"/>
    <property type="project" value="RHEA"/>
</dbReference>
<dbReference type="GO" id="GO:0050511">
    <property type="term" value="F:undecaprenyldiphospho-muramoylpentapeptide beta-N-acetylglucosaminyltransferase activity"/>
    <property type="evidence" value="ECO:0007669"/>
    <property type="project" value="UniProtKB-UniRule"/>
</dbReference>
<dbReference type="GO" id="GO:0005975">
    <property type="term" value="P:carbohydrate metabolic process"/>
    <property type="evidence" value="ECO:0007669"/>
    <property type="project" value="InterPro"/>
</dbReference>
<dbReference type="GO" id="GO:0051301">
    <property type="term" value="P:cell division"/>
    <property type="evidence" value="ECO:0007669"/>
    <property type="project" value="UniProtKB-KW"/>
</dbReference>
<dbReference type="GO" id="GO:0071555">
    <property type="term" value="P:cell wall organization"/>
    <property type="evidence" value="ECO:0007669"/>
    <property type="project" value="UniProtKB-KW"/>
</dbReference>
<dbReference type="GO" id="GO:0030259">
    <property type="term" value="P:lipid glycosylation"/>
    <property type="evidence" value="ECO:0007669"/>
    <property type="project" value="UniProtKB-UniRule"/>
</dbReference>
<dbReference type="GO" id="GO:0009252">
    <property type="term" value="P:peptidoglycan biosynthetic process"/>
    <property type="evidence" value="ECO:0007669"/>
    <property type="project" value="UniProtKB-UniRule"/>
</dbReference>
<dbReference type="GO" id="GO:0008360">
    <property type="term" value="P:regulation of cell shape"/>
    <property type="evidence" value="ECO:0007669"/>
    <property type="project" value="UniProtKB-KW"/>
</dbReference>
<dbReference type="CDD" id="cd03785">
    <property type="entry name" value="GT28_MurG"/>
    <property type="match status" value="1"/>
</dbReference>
<dbReference type="Gene3D" id="3.40.50.2000">
    <property type="entry name" value="Glycogen Phosphorylase B"/>
    <property type="match status" value="2"/>
</dbReference>
<dbReference type="HAMAP" id="MF_00033">
    <property type="entry name" value="MurG"/>
    <property type="match status" value="1"/>
</dbReference>
<dbReference type="InterPro" id="IPR006009">
    <property type="entry name" value="GlcNAc_MurG"/>
</dbReference>
<dbReference type="InterPro" id="IPR007235">
    <property type="entry name" value="Glyco_trans_28_C"/>
</dbReference>
<dbReference type="InterPro" id="IPR004276">
    <property type="entry name" value="GlycoTrans_28_N"/>
</dbReference>
<dbReference type="NCBIfam" id="TIGR01133">
    <property type="entry name" value="murG"/>
    <property type="match status" value="1"/>
</dbReference>
<dbReference type="PANTHER" id="PTHR21015:SF22">
    <property type="entry name" value="GLYCOSYLTRANSFERASE"/>
    <property type="match status" value="1"/>
</dbReference>
<dbReference type="PANTHER" id="PTHR21015">
    <property type="entry name" value="UDP-N-ACETYLGLUCOSAMINE--N-ACETYLMURAMYL-(PENTAPEPTIDE) PYROPHOSPHORYL-UNDECAPRENOL N-ACETYLGLUCOSAMINE TRANSFERASE 1"/>
    <property type="match status" value="1"/>
</dbReference>
<dbReference type="Pfam" id="PF04101">
    <property type="entry name" value="Glyco_tran_28_C"/>
    <property type="match status" value="1"/>
</dbReference>
<dbReference type="Pfam" id="PF03033">
    <property type="entry name" value="Glyco_transf_28"/>
    <property type="match status" value="1"/>
</dbReference>
<dbReference type="SUPFAM" id="SSF53756">
    <property type="entry name" value="UDP-Glycosyltransferase/glycogen phosphorylase"/>
    <property type="match status" value="1"/>
</dbReference>
<reference key="1">
    <citation type="submission" date="2005-08" db="EMBL/GenBank/DDBJ databases">
        <title>Complete sequence of chromosome 1 of Synechococcus elongatus PCC 7942.</title>
        <authorList>
            <consortium name="US DOE Joint Genome Institute"/>
            <person name="Copeland A."/>
            <person name="Lucas S."/>
            <person name="Lapidus A."/>
            <person name="Barry K."/>
            <person name="Detter J.C."/>
            <person name="Glavina T."/>
            <person name="Hammon N."/>
            <person name="Israni S."/>
            <person name="Pitluck S."/>
            <person name="Schmutz J."/>
            <person name="Larimer F."/>
            <person name="Land M."/>
            <person name="Kyrpides N."/>
            <person name="Lykidis A."/>
            <person name="Golden S."/>
            <person name="Richardson P."/>
        </authorList>
    </citation>
    <scope>NUCLEOTIDE SEQUENCE [LARGE SCALE GENOMIC DNA]</scope>
    <source>
        <strain>ATCC 33912 / PCC 7942 / FACHB-805</strain>
    </source>
</reference>
<organism>
    <name type="scientific">Synechococcus elongatus (strain ATCC 33912 / PCC 7942 / FACHB-805)</name>
    <name type="common">Anacystis nidulans R2</name>
    <dbReference type="NCBI Taxonomy" id="1140"/>
    <lineage>
        <taxon>Bacteria</taxon>
        <taxon>Bacillati</taxon>
        <taxon>Cyanobacteriota</taxon>
        <taxon>Cyanophyceae</taxon>
        <taxon>Synechococcales</taxon>
        <taxon>Synechococcaceae</taxon>
        <taxon>Synechococcus</taxon>
    </lineage>
</organism>
<accession>Q31KS7</accession>
<feature type="chain" id="PRO_1000002697" description="UDP-N-acetylglucosamine--N-acetylmuramyl-(pentapeptide) pyrophosphoryl-undecaprenol N-acetylglucosamine transferase">
    <location>
        <begin position="1"/>
        <end position="357"/>
    </location>
</feature>
<feature type="binding site" evidence="1">
    <location>
        <begin position="15"/>
        <end position="17"/>
    </location>
    <ligand>
        <name>UDP-N-acetyl-alpha-D-glucosamine</name>
        <dbReference type="ChEBI" id="CHEBI:57705"/>
    </ligand>
</feature>
<feature type="binding site" evidence="1">
    <location>
        <position position="123"/>
    </location>
    <ligand>
        <name>UDP-N-acetyl-alpha-D-glucosamine</name>
        <dbReference type="ChEBI" id="CHEBI:57705"/>
    </ligand>
</feature>
<feature type="binding site" evidence="1">
    <location>
        <position position="164"/>
    </location>
    <ligand>
        <name>UDP-N-acetyl-alpha-D-glucosamine</name>
        <dbReference type="ChEBI" id="CHEBI:57705"/>
    </ligand>
</feature>
<feature type="binding site" evidence="1">
    <location>
        <position position="190"/>
    </location>
    <ligand>
        <name>UDP-N-acetyl-alpha-D-glucosamine</name>
        <dbReference type="ChEBI" id="CHEBI:57705"/>
    </ligand>
</feature>
<feature type="binding site" evidence="1">
    <location>
        <position position="284"/>
    </location>
    <ligand>
        <name>UDP-N-acetyl-alpha-D-glucosamine</name>
        <dbReference type="ChEBI" id="CHEBI:57705"/>
    </ligand>
</feature>
<sequence length="357" mass="38081">MSVAQPRLLFAASGTGGHVFPALAVAEALPEAKIDWLGVPDRLETQLVGDRYPLHTIRVGGFQGSWLLRPLTALRLIGAIFKVRRLLKRQQIEAVFTTGGYIAGPAIAAAWSLGIPVVLHESNALPGKTTRLLSRFCRRVALGFAEAGEYLPGRPLQVVGTPLRSQFYQPSQHGLPIPENVPVLLVMGGSQGAVAINRLVRAAAPAWLAAGLWIVHLTGQQDPDRGQLQHPQYIELSFVDNVAPLLNRADFSISRAGAGSLAELAAAGLPSLLIPYPFAAEDHQTFNARIFAKAGAAILAPQSELTVEQLQQQILDLLRARLGAAIANPLPKMAAAAGKLHVADSAEQVANLLRSLL</sequence>
<protein>
    <recommendedName>
        <fullName evidence="1">UDP-N-acetylglucosamine--N-acetylmuramyl-(pentapeptide) pyrophosphoryl-undecaprenol N-acetylglucosamine transferase</fullName>
        <ecNumber evidence="1">2.4.1.227</ecNumber>
    </recommendedName>
    <alternativeName>
        <fullName evidence="1">Undecaprenyl-PP-MurNAc-pentapeptide-UDPGlcNAc GlcNAc transferase</fullName>
    </alternativeName>
</protein>
<proteinExistence type="inferred from homology"/>